<sequence>MSTTIIGFPRLGEFRELKFTTEKYFRKEISEEELLAAAKDLRAKHWNIVKEKGITEIPSNDFSHYDNFLDAAFLFNVVPASVQNLDLSDLERYFALGRGYQGEKGDVRALPMKKWFNTNYHYIVPKFEKDTQVKLAGHKIFDEFQEAKELGLNTRPVLVGPFTFLQLSDFEEGVKADDFVDSLVAAYQEVFAKLAELGATRIQLDEAALVKDLTAEEKALFLNLYNKLLADKKGLEVLLQTYFGDVRDVYADLVNLPVDAIGLDFVEGKKTLELVKGGFPADKTLYVGIVNGKNIWRNNYEKSLAVLEQIPAENIVLTSSCSLLHVPFTTANEEFEPALLNHFAFAVEKLDEIRDLDAIRNGQGSEALAANKELFATERVGENAELRARIAGLTDADYTRLPAFAEREAIQEEAFKLPALPTTTIGSFPQTKEVRAKRLAYRKGELSQKEYDAFLAETIDEWIKWQEDIDFDVLVHGEFERNDMVEYFGQNLSGYLFSKNGWVQSYGMRGVKPPIIWGDVTRLNPITVKWSSYAQSRTNKPVKGMLTGPVTILNWSFPREDISIKDSTLQIALAIKDEVLDLEAAGVKIIQIDEAALREKLPLRRSDWYEDYLDWAIPAFRLVHSTVAPDTQIHTHMCYSEFTDIIPAIDNMDADVISFEANRSNLEILDELKAKNFQTEVGPGVYDIHSPRVPNEGEIDNTIEAILAKVPSKKVWINPDCGLKTRGIPETKESLIRLVEAAKAAREKL</sequence>
<evidence type="ECO:0000255" key="1">
    <source>
        <dbReference type="HAMAP-Rule" id="MF_00172"/>
    </source>
</evidence>
<protein>
    <recommendedName>
        <fullName evidence="1">5-methyltetrahydropteroyltriglutamate--homocysteine methyltransferase</fullName>
        <ecNumber evidence="1">2.1.1.14</ecNumber>
    </recommendedName>
    <alternativeName>
        <fullName evidence="1">Cobalamin-independent methionine synthase</fullName>
    </alternativeName>
    <alternativeName>
        <fullName evidence="1">Methionine synthase, vitamin-B12 independent isozyme</fullName>
    </alternativeName>
</protein>
<accession>Q97S31</accession>
<name>METE_STRPN</name>
<keyword id="KW-0028">Amino-acid biosynthesis</keyword>
<keyword id="KW-0479">Metal-binding</keyword>
<keyword id="KW-0486">Methionine biosynthesis</keyword>
<keyword id="KW-0489">Methyltransferase</keyword>
<keyword id="KW-1185">Reference proteome</keyword>
<keyword id="KW-0677">Repeat</keyword>
<keyword id="KW-0808">Transferase</keyword>
<keyword id="KW-0862">Zinc</keyword>
<comment type="function">
    <text evidence="1">Catalyzes the transfer of a methyl group from 5-methyltetrahydrofolate to homocysteine resulting in methionine formation.</text>
</comment>
<comment type="catalytic activity">
    <reaction evidence="1">
        <text>5-methyltetrahydropteroyltri-L-glutamate + L-homocysteine = tetrahydropteroyltri-L-glutamate + L-methionine</text>
        <dbReference type="Rhea" id="RHEA:21196"/>
        <dbReference type="ChEBI" id="CHEBI:57844"/>
        <dbReference type="ChEBI" id="CHEBI:58140"/>
        <dbReference type="ChEBI" id="CHEBI:58199"/>
        <dbReference type="ChEBI" id="CHEBI:58207"/>
        <dbReference type="EC" id="2.1.1.14"/>
    </reaction>
</comment>
<comment type="cofactor">
    <cofactor evidence="1">
        <name>Zn(2+)</name>
        <dbReference type="ChEBI" id="CHEBI:29105"/>
    </cofactor>
    <text evidence="1">Binds 1 zinc ion per subunit.</text>
</comment>
<comment type="pathway">
    <text evidence="1">Amino-acid biosynthesis; L-methionine biosynthesis via de novo pathway; L-methionine from L-homocysteine (MetE route): step 1/1.</text>
</comment>
<comment type="similarity">
    <text evidence="1">Belongs to the vitamin-B12 independent methionine synthase family.</text>
</comment>
<dbReference type="EC" id="2.1.1.14" evidence="1"/>
<dbReference type="EMBL" id="AE005672">
    <property type="protein sequence ID" value="AAK74738.1"/>
    <property type="molecule type" value="Genomic_DNA"/>
</dbReference>
<dbReference type="PIR" id="A95068">
    <property type="entry name" value="A95068"/>
</dbReference>
<dbReference type="RefSeq" id="WP_000108201.1">
    <property type="nucleotide sequence ID" value="NZ_CP155539.1"/>
</dbReference>
<dbReference type="SMR" id="Q97S31"/>
<dbReference type="PaxDb" id="170187-SP_0585"/>
<dbReference type="EnsemblBacteria" id="AAK74738">
    <property type="protein sequence ID" value="AAK74738"/>
    <property type="gene ID" value="SP_0585"/>
</dbReference>
<dbReference type="KEGG" id="spn:SP_0585"/>
<dbReference type="eggNOG" id="COG0620">
    <property type="taxonomic scope" value="Bacteria"/>
</dbReference>
<dbReference type="PhylomeDB" id="Q97S31"/>
<dbReference type="BioCyc" id="SPNE170187:G1FZB-604-MONOMER"/>
<dbReference type="UniPathway" id="UPA00051">
    <property type="reaction ID" value="UER00082"/>
</dbReference>
<dbReference type="PHI-base" id="PHI:2733"/>
<dbReference type="Proteomes" id="UP000000585">
    <property type="component" value="Chromosome"/>
</dbReference>
<dbReference type="GO" id="GO:0003871">
    <property type="term" value="F:5-methyltetrahydropteroyltriglutamate-homocysteine S-methyltransferase activity"/>
    <property type="evidence" value="ECO:0007669"/>
    <property type="project" value="UniProtKB-UniRule"/>
</dbReference>
<dbReference type="GO" id="GO:0008270">
    <property type="term" value="F:zinc ion binding"/>
    <property type="evidence" value="ECO:0007669"/>
    <property type="project" value="InterPro"/>
</dbReference>
<dbReference type="GO" id="GO:0009086">
    <property type="term" value="P:methionine biosynthetic process"/>
    <property type="evidence" value="ECO:0007669"/>
    <property type="project" value="UniProtKB-UniRule"/>
</dbReference>
<dbReference type="GO" id="GO:0032259">
    <property type="term" value="P:methylation"/>
    <property type="evidence" value="ECO:0007669"/>
    <property type="project" value="UniProtKB-KW"/>
</dbReference>
<dbReference type="CDD" id="cd03311">
    <property type="entry name" value="CIMS_C_terminal_like"/>
    <property type="match status" value="1"/>
</dbReference>
<dbReference type="CDD" id="cd03312">
    <property type="entry name" value="CIMS_N_terminal_like"/>
    <property type="match status" value="1"/>
</dbReference>
<dbReference type="Gene3D" id="3.20.20.210">
    <property type="match status" value="2"/>
</dbReference>
<dbReference type="HAMAP" id="MF_00172">
    <property type="entry name" value="Meth_synth"/>
    <property type="match status" value="1"/>
</dbReference>
<dbReference type="InterPro" id="IPR013215">
    <property type="entry name" value="Cbl-indep_Met_Synth_N"/>
</dbReference>
<dbReference type="InterPro" id="IPR006276">
    <property type="entry name" value="Cobalamin-indep_Met_synthase"/>
</dbReference>
<dbReference type="InterPro" id="IPR002629">
    <property type="entry name" value="Met_Synth_C/arc"/>
</dbReference>
<dbReference type="InterPro" id="IPR038071">
    <property type="entry name" value="UROD/MetE-like_sf"/>
</dbReference>
<dbReference type="NCBIfam" id="TIGR01371">
    <property type="entry name" value="met_syn_B12ind"/>
    <property type="match status" value="1"/>
</dbReference>
<dbReference type="NCBIfam" id="NF003556">
    <property type="entry name" value="PRK05222.1"/>
    <property type="match status" value="1"/>
</dbReference>
<dbReference type="PANTHER" id="PTHR30519">
    <property type="entry name" value="5-METHYLTETRAHYDROPTEROYLTRIGLUTAMATE--HOMOCYSTEINE METHYLTRANSFERASE"/>
    <property type="match status" value="1"/>
</dbReference>
<dbReference type="Pfam" id="PF08267">
    <property type="entry name" value="Meth_synt_1"/>
    <property type="match status" value="1"/>
</dbReference>
<dbReference type="Pfam" id="PF01717">
    <property type="entry name" value="Meth_synt_2"/>
    <property type="match status" value="1"/>
</dbReference>
<dbReference type="PIRSF" id="PIRSF000382">
    <property type="entry name" value="MeTrfase_B12_ind"/>
    <property type="match status" value="1"/>
</dbReference>
<dbReference type="SUPFAM" id="SSF51726">
    <property type="entry name" value="UROD/MetE-like"/>
    <property type="match status" value="2"/>
</dbReference>
<gene>
    <name evidence="1" type="primary">metE</name>
    <name type="ordered locus">SP_0585</name>
</gene>
<reference key="1">
    <citation type="journal article" date="2001" name="Science">
        <title>Complete genome sequence of a virulent isolate of Streptococcus pneumoniae.</title>
        <authorList>
            <person name="Tettelin H."/>
            <person name="Nelson K.E."/>
            <person name="Paulsen I.T."/>
            <person name="Eisen J.A."/>
            <person name="Read T.D."/>
            <person name="Peterson S.N."/>
            <person name="Heidelberg J.F."/>
            <person name="DeBoy R.T."/>
            <person name="Haft D.H."/>
            <person name="Dodson R.J."/>
            <person name="Durkin A.S."/>
            <person name="Gwinn M.L."/>
            <person name="Kolonay J.F."/>
            <person name="Nelson W.C."/>
            <person name="Peterson J.D."/>
            <person name="Umayam L.A."/>
            <person name="White O."/>
            <person name="Salzberg S.L."/>
            <person name="Lewis M.R."/>
            <person name="Radune D."/>
            <person name="Holtzapple E.K."/>
            <person name="Khouri H.M."/>
            <person name="Wolf A.M."/>
            <person name="Utterback T.R."/>
            <person name="Hansen C.L."/>
            <person name="McDonald L.A."/>
            <person name="Feldblyum T.V."/>
            <person name="Angiuoli S.V."/>
            <person name="Dickinson T."/>
            <person name="Hickey E.K."/>
            <person name="Holt I.E."/>
            <person name="Loftus B.J."/>
            <person name="Yang F."/>
            <person name="Smith H.O."/>
            <person name="Venter J.C."/>
            <person name="Dougherty B.A."/>
            <person name="Morrison D.A."/>
            <person name="Hollingshead S.K."/>
            <person name="Fraser C.M."/>
        </authorList>
    </citation>
    <scope>NUCLEOTIDE SEQUENCE [LARGE SCALE GENOMIC DNA]</scope>
    <source>
        <strain>ATCC BAA-334 / TIGR4</strain>
    </source>
</reference>
<organism>
    <name type="scientific">Streptococcus pneumoniae serotype 4 (strain ATCC BAA-334 / TIGR4)</name>
    <dbReference type="NCBI Taxonomy" id="170187"/>
    <lineage>
        <taxon>Bacteria</taxon>
        <taxon>Bacillati</taxon>
        <taxon>Bacillota</taxon>
        <taxon>Bacilli</taxon>
        <taxon>Lactobacillales</taxon>
        <taxon>Streptococcaceae</taxon>
        <taxon>Streptococcus</taxon>
    </lineage>
</organism>
<feature type="chain" id="PRO_0000098671" description="5-methyltetrahydropteroyltriglutamate--homocysteine methyltransferase">
    <location>
        <begin position="1"/>
        <end position="749"/>
    </location>
</feature>
<feature type="active site" description="Proton donor" evidence="1">
    <location>
        <position position="689"/>
    </location>
</feature>
<feature type="binding site" evidence="1">
    <location>
        <begin position="15"/>
        <end position="18"/>
    </location>
    <ligand>
        <name>5-methyltetrahydropteroyltri-L-glutamate</name>
        <dbReference type="ChEBI" id="CHEBI:58207"/>
    </ligand>
</feature>
<feature type="binding site" evidence="1">
    <location>
        <position position="114"/>
    </location>
    <ligand>
        <name>5-methyltetrahydropteroyltri-L-glutamate</name>
        <dbReference type="ChEBI" id="CHEBI:58207"/>
    </ligand>
</feature>
<feature type="binding site" evidence="1">
    <location>
        <begin position="425"/>
        <end position="427"/>
    </location>
    <ligand>
        <name>L-homocysteine</name>
        <dbReference type="ChEBI" id="CHEBI:58199"/>
    </ligand>
</feature>
<feature type="binding site" evidence="1">
    <location>
        <begin position="425"/>
        <end position="427"/>
    </location>
    <ligand>
        <name>L-methionine</name>
        <dbReference type="ChEBI" id="CHEBI:57844"/>
    </ligand>
</feature>
<feature type="binding site" evidence="1">
    <location>
        <position position="478"/>
    </location>
    <ligand>
        <name>L-homocysteine</name>
        <dbReference type="ChEBI" id="CHEBI:58199"/>
    </ligand>
</feature>
<feature type="binding site" evidence="1">
    <location>
        <position position="478"/>
    </location>
    <ligand>
        <name>L-methionine</name>
        <dbReference type="ChEBI" id="CHEBI:57844"/>
    </ligand>
</feature>
<feature type="binding site" evidence="1">
    <location>
        <position position="555"/>
    </location>
    <ligand>
        <name>5-methyltetrahydropteroyltri-L-glutamate</name>
        <dbReference type="ChEBI" id="CHEBI:58207"/>
    </ligand>
</feature>
<feature type="binding site" evidence="1">
    <location>
        <position position="593"/>
    </location>
    <ligand>
        <name>L-homocysteine</name>
        <dbReference type="ChEBI" id="CHEBI:58199"/>
    </ligand>
</feature>
<feature type="binding site" evidence="1">
    <location>
        <position position="593"/>
    </location>
    <ligand>
        <name>L-methionine</name>
        <dbReference type="ChEBI" id="CHEBI:57844"/>
    </ligand>
</feature>
<feature type="binding site" evidence="1">
    <location>
        <position position="599"/>
    </location>
    <ligand>
        <name>5-methyltetrahydropteroyltri-L-glutamate</name>
        <dbReference type="ChEBI" id="CHEBI:58207"/>
    </ligand>
</feature>
<feature type="binding site" evidence="1">
    <location>
        <position position="636"/>
    </location>
    <ligand>
        <name>Zn(2+)</name>
        <dbReference type="ChEBI" id="CHEBI:29105"/>
        <note>catalytic</note>
    </ligand>
</feature>
<feature type="binding site" evidence="1">
    <location>
        <position position="638"/>
    </location>
    <ligand>
        <name>Zn(2+)</name>
        <dbReference type="ChEBI" id="CHEBI:29105"/>
        <note>catalytic</note>
    </ligand>
</feature>
<feature type="binding site" evidence="1">
    <location>
        <position position="660"/>
    </location>
    <ligand>
        <name>Zn(2+)</name>
        <dbReference type="ChEBI" id="CHEBI:29105"/>
        <note>catalytic</note>
    </ligand>
</feature>
<feature type="binding site" evidence="1">
    <location>
        <position position="721"/>
    </location>
    <ligand>
        <name>Zn(2+)</name>
        <dbReference type="ChEBI" id="CHEBI:29105"/>
        <note>catalytic</note>
    </ligand>
</feature>
<proteinExistence type="inferred from homology"/>